<feature type="signal peptide" evidence="2">
    <location>
        <begin position="1"/>
        <end position="19"/>
    </location>
</feature>
<feature type="propeptide" id="PRO_0000412378" evidence="1">
    <location>
        <begin position="20"/>
        <end position="87"/>
    </location>
</feature>
<feature type="chain" id="PRO_0000412379" description="Leucine aminopeptidase 1">
    <location>
        <begin position="88"/>
        <end position="385"/>
    </location>
</feature>
<feature type="binding site" evidence="1">
    <location>
        <position position="185"/>
    </location>
    <ligand>
        <name>Zn(2+)</name>
        <dbReference type="ChEBI" id="CHEBI:29105"/>
        <label>1</label>
    </ligand>
</feature>
<feature type="binding site" evidence="1">
    <location>
        <position position="204"/>
    </location>
    <ligand>
        <name>Zn(2+)</name>
        <dbReference type="ChEBI" id="CHEBI:29105"/>
        <label>1</label>
    </ligand>
</feature>
<feature type="binding site" evidence="1">
    <location>
        <position position="204"/>
    </location>
    <ligand>
        <name>Zn(2+)</name>
        <dbReference type="ChEBI" id="CHEBI:29105"/>
        <label>2</label>
        <note>catalytic</note>
    </ligand>
</feature>
<feature type="binding site" evidence="1">
    <location>
        <position position="243"/>
    </location>
    <ligand>
        <name>Zn(2+)</name>
        <dbReference type="ChEBI" id="CHEBI:29105"/>
        <label>2</label>
        <note>catalytic</note>
    </ligand>
</feature>
<feature type="binding site" evidence="1">
    <location>
        <position position="270"/>
    </location>
    <ligand>
        <name>Zn(2+)</name>
        <dbReference type="ChEBI" id="CHEBI:29105"/>
        <label>1</label>
    </ligand>
</feature>
<feature type="binding site" evidence="1">
    <location>
        <position position="352"/>
    </location>
    <ligand>
        <name>Zn(2+)</name>
        <dbReference type="ChEBI" id="CHEBI:29105"/>
        <label>2</label>
        <note>catalytic</note>
    </ligand>
</feature>
<feature type="glycosylation site" description="N-linked (GlcNAc...) asparagine" evidence="2">
    <location>
        <position position="177"/>
    </location>
</feature>
<feature type="disulfide bond" evidence="1">
    <location>
        <begin position="319"/>
        <end position="323"/>
    </location>
</feature>
<protein>
    <recommendedName>
        <fullName>Leucine aminopeptidase 1</fullName>
        <ecNumber>3.4.11.-</ecNumber>
    </recommendedName>
    <alternativeName>
        <fullName>Leucyl aminopeptidase 1</fullName>
        <shortName>LAP1</shortName>
    </alternativeName>
</protein>
<sequence length="385" mass="42590">MKFPNLLSLGVAASTTVLAAVPNQKPIGDTIEDVHLGKFLIELGPGDTRWVTEEEKWGLRRDGRRFFDITAEAEQNVFPRTFAQTTVTFPTELQNLAHVKKLASSLSKNRLQTFLTKFTSFYTRYYKSESGRQSAIWLFEQIEKTIQESSATEARVEKFEHPWGQFSIIATIPGQTNKTVVVGAHQDSINLLMPSILAAPGADDDGSGTATILEALRVLLKSEAVAQGKAPNTVEFHWYSAEEAGLLGSQAVFAQYKQDNRDVKSMLQQDMTGYSKGTMNAGHADSVGIITDFVDEGLTNFIKKVVTGYCGISYVLTKCGYACSDHASASRYGYPSAFVIESKFEYSSKLIHTTRDEVSSLDFDHMLQHAKMTLGLVYELAFADL</sequence>
<accession>F0URV0</accession>
<organism>
    <name type="scientific">Ajellomyces capsulatus (strain H88)</name>
    <name type="common">Darling's disease fungus</name>
    <name type="synonym">Histoplasma capsulatum</name>
    <dbReference type="NCBI Taxonomy" id="544711"/>
    <lineage>
        <taxon>Eukaryota</taxon>
        <taxon>Fungi</taxon>
        <taxon>Dikarya</taxon>
        <taxon>Ascomycota</taxon>
        <taxon>Pezizomycotina</taxon>
        <taxon>Eurotiomycetes</taxon>
        <taxon>Eurotiomycetidae</taxon>
        <taxon>Onygenales</taxon>
        <taxon>Ajellomycetaceae</taxon>
        <taxon>Histoplasma</taxon>
    </lineage>
</organism>
<comment type="function">
    <text evidence="1">Extracellular aminopeptidase that allows assimilation of proteinaceous substrates.</text>
</comment>
<comment type="cofactor">
    <cofactor evidence="1">
        <name>Zn(2+)</name>
        <dbReference type="ChEBI" id="CHEBI:29105"/>
    </cofactor>
    <text evidence="1">Binds 2 Zn(2+) ions per subunit.</text>
</comment>
<comment type="subunit">
    <text evidence="1">Monomer.</text>
</comment>
<comment type="subcellular location">
    <subcellularLocation>
        <location evidence="1">Secreted</location>
    </subcellularLocation>
</comment>
<comment type="similarity">
    <text evidence="3">Belongs to the peptidase M28 family. M28E subfamily.</text>
</comment>
<name>LAP1_AJEC8</name>
<keyword id="KW-0031">Aminopeptidase</keyword>
<keyword id="KW-1015">Disulfide bond</keyword>
<keyword id="KW-0325">Glycoprotein</keyword>
<keyword id="KW-0378">Hydrolase</keyword>
<keyword id="KW-0479">Metal-binding</keyword>
<keyword id="KW-0645">Protease</keyword>
<keyword id="KW-1185">Reference proteome</keyword>
<keyword id="KW-0964">Secreted</keyword>
<keyword id="KW-0732">Signal</keyword>
<keyword id="KW-0862">Zinc</keyword>
<keyword id="KW-0865">Zymogen</keyword>
<gene>
    <name type="primary">LAP1</name>
    <name type="ORF">HCEG_07842</name>
</gene>
<evidence type="ECO:0000250" key="1"/>
<evidence type="ECO:0000255" key="2"/>
<evidence type="ECO:0000305" key="3"/>
<proteinExistence type="inferred from homology"/>
<dbReference type="EC" id="3.4.11.-"/>
<dbReference type="EMBL" id="DS990641">
    <property type="protein sequence ID" value="EGC48627.1"/>
    <property type="molecule type" value="Genomic_DNA"/>
</dbReference>
<dbReference type="SMR" id="F0URV0"/>
<dbReference type="STRING" id="544711.F0URV0"/>
<dbReference type="GlyCosmos" id="F0URV0">
    <property type="glycosylation" value="1 site, No reported glycans"/>
</dbReference>
<dbReference type="VEuPathDB" id="FungiDB:I7I53_11396"/>
<dbReference type="HOGENOM" id="CLU_025866_0_0_1"/>
<dbReference type="OMA" id="GMLQQDM"/>
<dbReference type="OrthoDB" id="2214at2759"/>
<dbReference type="Proteomes" id="UP000008142">
    <property type="component" value="Unassembled WGS sequence"/>
</dbReference>
<dbReference type="GO" id="GO:0005576">
    <property type="term" value="C:extracellular region"/>
    <property type="evidence" value="ECO:0007669"/>
    <property type="project" value="UniProtKB-SubCell"/>
</dbReference>
<dbReference type="GO" id="GO:0004177">
    <property type="term" value="F:aminopeptidase activity"/>
    <property type="evidence" value="ECO:0007669"/>
    <property type="project" value="UniProtKB-KW"/>
</dbReference>
<dbReference type="GO" id="GO:0046872">
    <property type="term" value="F:metal ion binding"/>
    <property type="evidence" value="ECO:0007669"/>
    <property type="project" value="UniProtKB-KW"/>
</dbReference>
<dbReference type="GO" id="GO:0008235">
    <property type="term" value="F:metalloexopeptidase activity"/>
    <property type="evidence" value="ECO:0007669"/>
    <property type="project" value="InterPro"/>
</dbReference>
<dbReference type="GO" id="GO:0006508">
    <property type="term" value="P:proteolysis"/>
    <property type="evidence" value="ECO:0007669"/>
    <property type="project" value="UniProtKB-KW"/>
</dbReference>
<dbReference type="CDD" id="cd03879">
    <property type="entry name" value="M28_AAP"/>
    <property type="match status" value="1"/>
</dbReference>
<dbReference type="FunFam" id="3.40.630.10:FF:000042">
    <property type="entry name" value="Peptide hydrolase"/>
    <property type="match status" value="1"/>
</dbReference>
<dbReference type="Gene3D" id="3.40.630.10">
    <property type="entry name" value="Zn peptidases"/>
    <property type="match status" value="1"/>
</dbReference>
<dbReference type="InterPro" id="IPR045175">
    <property type="entry name" value="M28_fam"/>
</dbReference>
<dbReference type="InterPro" id="IPR007484">
    <property type="entry name" value="Peptidase_M28"/>
</dbReference>
<dbReference type="PANTHER" id="PTHR12147:SF56">
    <property type="entry name" value="AMINOPEPTIDASE YDR415C-RELATED"/>
    <property type="match status" value="1"/>
</dbReference>
<dbReference type="PANTHER" id="PTHR12147">
    <property type="entry name" value="METALLOPEPTIDASE M28 FAMILY MEMBER"/>
    <property type="match status" value="1"/>
</dbReference>
<dbReference type="Pfam" id="PF04389">
    <property type="entry name" value="Peptidase_M28"/>
    <property type="match status" value="1"/>
</dbReference>
<dbReference type="SUPFAM" id="SSF53187">
    <property type="entry name" value="Zn-dependent exopeptidases"/>
    <property type="match status" value="1"/>
</dbReference>
<reference key="1">
    <citation type="submission" date="2008-07" db="EMBL/GenBank/DDBJ databases">
        <title>Annotation of Ajellomyces capsulatus strain H88.</title>
        <authorList>
            <person name="Champion M."/>
            <person name="Cuomo C."/>
            <person name="Ma L.-J."/>
            <person name="Henn M.R."/>
            <person name="Sil A."/>
            <person name="Goldman B."/>
            <person name="Young S.K."/>
            <person name="Kodira C.D."/>
            <person name="Zeng Q."/>
            <person name="Koehrsen M."/>
            <person name="Alvarado L."/>
            <person name="Berlin A."/>
            <person name="Borenstein D."/>
            <person name="Chen Z."/>
            <person name="Engels R."/>
            <person name="Freedman E."/>
            <person name="Gellesch M."/>
            <person name="Goldberg J."/>
            <person name="Griggs A."/>
            <person name="Gujja S."/>
            <person name="Heiman D."/>
            <person name="Hepburn T."/>
            <person name="Howarth C."/>
            <person name="Jen D."/>
            <person name="Larson L."/>
            <person name="Lewis B."/>
            <person name="Mehta T."/>
            <person name="Park D."/>
            <person name="Pearson M."/>
            <person name="Roberts A."/>
            <person name="Saif S."/>
            <person name="Shea T."/>
            <person name="Shenoy N."/>
            <person name="Sisk P."/>
            <person name="Stolte C."/>
            <person name="Sykes S."/>
            <person name="Walk T."/>
            <person name="White J."/>
            <person name="Yandava C."/>
            <person name="Klein B."/>
            <person name="McEwen J.G."/>
            <person name="Puccia R."/>
            <person name="Goldman G.H."/>
            <person name="Felipe M.S."/>
            <person name="Nino-Vega G."/>
            <person name="San-Blas G."/>
            <person name="Taylor J."/>
            <person name="Mendoza L."/>
            <person name="Galagan J."/>
            <person name="Nusbaum C."/>
            <person name="Birren B."/>
        </authorList>
    </citation>
    <scope>NUCLEOTIDE SEQUENCE [LARGE SCALE GENOMIC DNA]</scope>
    <source>
        <strain>H88</strain>
    </source>
</reference>